<evidence type="ECO:0000255" key="1">
    <source>
        <dbReference type="HAMAP-Rule" id="MF_00037"/>
    </source>
</evidence>
<name>MURB_RICCK</name>
<accession>A8EXZ7</accession>
<sequence length="297" mass="32787">MMTLPIVKGEYKKDYNLKHLTWFKVGGNAEIFFKPFDSEDLASFLRQNKQKLPITTFGAGSNIIIRDGGIEGVTIKLGQSFSNIDFIDDNHLVVGSSCLNYNLAKFCQANAISGFEFLVGIPGTIGGGAAMNAGAYGSEFKDIIVRIEAIDFAGNFLTFTNEEIGFKYRSNNLPKNLIILKAIFKVNKGDSENILLRMNEINATRSRTQPIKERTGGSTFANPEGGLKSWQLIDKAGLRGYRIGGASVSELHCNFMINNGDATAKDLEDLGNFVRQNVFEDSGVKLNWEIKRIGKYV</sequence>
<organism>
    <name type="scientific">Rickettsia canadensis (strain McKiel)</name>
    <dbReference type="NCBI Taxonomy" id="293613"/>
    <lineage>
        <taxon>Bacteria</taxon>
        <taxon>Pseudomonadati</taxon>
        <taxon>Pseudomonadota</taxon>
        <taxon>Alphaproteobacteria</taxon>
        <taxon>Rickettsiales</taxon>
        <taxon>Rickettsiaceae</taxon>
        <taxon>Rickettsieae</taxon>
        <taxon>Rickettsia</taxon>
        <taxon>belli group</taxon>
    </lineage>
</organism>
<comment type="function">
    <text evidence="1">Cell wall formation.</text>
</comment>
<comment type="catalytic activity">
    <reaction evidence="1">
        <text>UDP-N-acetyl-alpha-D-muramate + NADP(+) = UDP-N-acetyl-3-O-(1-carboxyvinyl)-alpha-D-glucosamine + NADPH + H(+)</text>
        <dbReference type="Rhea" id="RHEA:12248"/>
        <dbReference type="ChEBI" id="CHEBI:15378"/>
        <dbReference type="ChEBI" id="CHEBI:57783"/>
        <dbReference type="ChEBI" id="CHEBI:58349"/>
        <dbReference type="ChEBI" id="CHEBI:68483"/>
        <dbReference type="ChEBI" id="CHEBI:70757"/>
        <dbReference type="EC" id="1.3.1.98"/>
    </reaction>
</comment>
<comment type="cofactor">
    <cofactor evidence="1">
        <name>FAD</name>
        <dbReference type="ChEBI" id="CHEBI:57692"/>
    </cofactor>
</comment>
<comment type="pathway">
    <text evidence="1">Cell wall biogenesis; peptidoglycan biosynthesis.</text>
</comment>
<comment type="subcellular location">
    <subcellularLocation>
        <location evidence="1">Cytoplasm</location>
    </subcellularLocation>
</comment>
<comment type="similarity">
    <text evidence="1">Belongs to the MurB family.</text>
</comment>
<protein>
    <recommendedName>
        <fullName evidence="1">UDP-N-acetylenolpyruvoylglucosamine reductase</fullName>
        <ecNumber evidence="1">1.3.1.98</ecNumber>
    </recommendedName>
    <alternativeName>
        <fullName evidence="1">UDP-N-acetylmuramate dehydrogenase</fullName>
    </alternativeName>
</protein>
<gene>
    <name evidence="1" type="primary">murB</name>
    <name type="ordered locus">A1E_01425</name>
</gene>
<keyword id="KW-0131">Cell cycle</keyword>
<keyword id="KW-0132">Cell division</keyword>
<keyword id="KW-0133">Cell shape</keyword>
<keyword id="KW-0961">Cell wall biogenesis/degradation</keyword>
<keyword id="KW-0963">Cytoplasm</keyword>
<keyword id="KW-0274">FAD</keyword>
<keyword id="KW-0285">Flavoprotein</keyword>
<keyword id="KW-0521">NADP</keyword>
<keyword id="KW-0560">Oxidoreductase</keyword>
<keyword id="KW-0573">Peptidoglycan synthesis</keyword>
<dbReference type="EC" id="1.3.1.98" evidence="1"/>
<dbReference type="EMBL" id="CP000409">
    <property type="protein sequence ID" value="ABV73230.1"/>
    <property type="molecule type" value="Genomic_DNA"/>
</dbReference>
<dbReference type="RefSeq" id="WP_012148429.1">
    <property type="nucleotide sequence ID" value="NC_009879.1"/>
</dbReference>
<dbReference type="SMR" id="A8EXZ7"/>
<dbReference type="STRING" id="293613.A1E_01425"/>
<dbReference type="KEGG" id="rcm:A1E_01425"/>
<dbReference type="eggNOG" id="COG0812">
    <property type="taxonomic scope" value="Bacteria"/>
</dbReference>
<dbReference type="HOGENOM" id="CLU_035304_1_0_5"/>
<dbReference type="UniPathway" id="UPA00219"/>
<dbReference type="Proteomes" id="UP000007056">
    <property type="component" value="Chromosome"/>
</dbReference>
<dbReference type="GO" id="GO:0005829">
    <property type="term" value="C:cytosol"/>
    <property type="evidence" value="ECO:0007669"/>
    <property type="project" value="TreeGrafter"/>
</dbReference>
<dbReference type="GO" id="GO:0071949">
    <property type="term" value="F:FAD binding"/>
    <property type="evidence" value="ECO:0007669"/>
    <property type="project" value="InterPro"/>
</dbReference>
<dbReference type="GO" id="GO:0008762">
    <property type="term" value="F:UDP-N-acetylmuramate dehydrogenase activity"/>
    <property type="evidence" value="ECO:0007669"/>
    <property type="project" value="UniProtKB-UniRule"/>
</dbReference>
<dbReference type="GO" id="GO:0051301">
    <property type="term" value="P:cell division"/>
    <property type="evidence" value="ECO:0007669"/>
    <property type="project" value="UniProtKB-KW"/>
</dbReference>
<dbReference type="GO" id="GO:0071555">
    <property type="term" value="P:cell wall organization"/>
    <property type="evidence" value="ECO:0007669"/>
    <property type="project" value="UniProtKB-KW"/>
</dbReference>
<dbReference type="GO" id="GO:0009252">
    <property type="term" value="P:peptidoglycan biosynthetic process"/>
    <property type="evidence" value="ECO:0007669"/>
    <property type="project" value="UniProtKB-UniRule"/>
</dbReference>
<dbReference type="GO" id="GO:0008360">
    <property type="term" value="P:regulation of cell shape"/>
    <property type="evidence" value="ECO:0007669"/>
    <property type="project" value="UniProtKB-KW"/>
</dbReference>
<dbReference type="Gene3D" id="3.30.465.10">
    <property type="match status" value="1"/>
</dbReference>
<dbReference type="Gene3D" id="3.90.78.10">
    <property type="entry name" value="UDP-N-acetylenolpyruvoylglucosamine reductase, C-terminal domain"/>
    <property type="match status" value="1"/>
</dbReference>
<dbReference type="Gene3D" id="3.30.43.10">
    <property type="entry name" value="Uridine Diphospho-n-acetylenolpyruvylglucosamine Reductase, domain 2"/>
    <property type="match status" value="1"/>
</dbReference>
<dbReference type="HAMAP" id="MF_00037">
    <property type="entry name" value="MurB"/>
    <property type="match status" value="1"/>
</dbReference>
<dbReference type="InterPro" id="IPR016166">
    <property type="entry name" value="FAD-bd_PCMH"/>
</dbReference>
<dbReference type="InterPro" id="IPR036318">
    <property type="entry name" value="FAD-bd_PCMH-like_sf"/>
</dbReference>
<dbReference type="InterPro" id="IPR016167">
    <property type="entry name" value="FAD-bd_PCMH_sub1"/>
</dbReference>
<dbReference type="InterPro" id="IPR016169">
    <property type="entry name" value="FAD-bd_PCMH_sub2"/>
</dbReference>
<dbReference type="InterPro" id="IPR003170">
    <property type="entry name" value="MurB"/>
</dbReference>
<dbReference type="InterPro" id="IPR011601">
    <property type="entry name" value="MurB_C"/>
</dbReference>
<dbReference type="InterPro" id="IPR036635">
    <property type="entry name" value="MurB_C_sf"/>
</dbReference>
<dbReference type="InterPro" id="IPR006094">
    <property type="entry name" value="Oxid_FAD_bind_N"/>
</dbReference>
<dbReference type="NCBIfam" id="TIGR00179">
    <property type="entry name" value="murB"/>
    <property type="match status" value="1"/>
</dbReference>
<dbReference type="NCBIfam" id="NF010480">
    <property type="entry name" value="PRK13905.1"/>
    <property type="match status" value="1"/>
</dbReference>
<dbReference type="PANTHER" id="PTHR21071">
    <property type="entry name" value="UDP-N-ACETYLENOLPYRUVOYLGLUCOSAMINE REDUCTASE"/>
    <property type="match status" value="1"/>
</dbReference>
<dbReference type="PANTHER" id="PTHR21071:SF4">
    <property type="entry name" value="UDP-N-ACETYLENOLPYRUVOYLGLUCOSAMINE REDUCTASE"/>
    <property type="match status" value="1"/>
</dbReference>
<dbReference type="Pfam" id="PF01565">
    <property type="entry name" value="FAD_binding_4"/>
    <property type="match status" value="1"/>
</dbReference>
<dbReference type="Pfam" id="PF02873">
    <property type="entry name" value="MurB_C"/>
    <property type="match status" value="1"/>
</dbReference>
<dbReference type="SUPFAM" id="SSF56176">
    <property type="entry name" value="FAD-binding/transporter-associated domain-like"/>
    <property type="match status" value="1"/>
</dbReference>
<dbReference type="SUPFAM" id="SSF56194">
    <property type="entry name" value="Uridine diphospho-N-Acetylenolpyruvylglucosamine reductase, MurB, C-terminal domain"/>
    <property type="match status" value="1"/>
</dbReference>
<dbReference type="PROSITE" id="PS51387">
    <property type="entry name" value="FAD_PCMH"/>
    <property type="match status" value="1"/>
</dbReference>
<reference key="1">
    <citation type="submission" date="2007-09" db="EMBL/GenBank/DDBJ databases">
        <title>Complete genome sequence of Rickettsia canadensis.</title>
        <authorList>
            <person name="Madan A."/>
            <person name="Fahey J."/>
            <person name="Helton E."/>
            <person name="Ketteman M."/>
            <person name="Madan A."/>
            <person name="Rodrigues S."/>
            <person name="Sanchez A."/>
            <person name="Whiting M."/>
            <person name="Dasch G."/>
            <person name="Eremeeva M."/>
        </authorList>
    </citation>
    <scope>NUCLEOTIDE SEQUENCE [LARGE SCALE GENOMIC DNA]</scope>
    <source>
        <strain>McKiel</strain>
    </source>
</reference>
<proteinExistence type="inferred from homology"/>
<feature type="chain" id="PRO_1000002909" description="UDP-N-acetylenolpyruvoylglucosamine reductase">
    <location>
        <begin position="1"/>
        <end position="297"/>
    </location>
</feature>
<feature type="domain" description="FAD-binding PCMH-type" evidence="1">
    <location>
        <begin position="24"/>
        <end position="189"/>
    </location>
</feature>
<feature type="active site" evidence="1">
    <location>
        <position position="169"/>
    </location>
</feature>
<feature type="active site" description="Proton donor" evidence="1">
    <location>
        <position position="218"/>
    </location>
</feature>
<feature type="active site" evidence="1">
    <location>
        <position position="289"/>
    </location>
</feature>